<evidence type="ECO:0000255" key="1">
    <source>
        <dbReference type="HAMAP-Rule" id="MF_01333"/>
    </source>
</evidence>
<evidence type="ECO:0000305" key="2"/>
<feature type="chain" id="PRO_1000052812" description="Large ribosomal subunit protein uL5">
    <location>
        <begin position="1"/>
        <end position="179"/>
    </location>
</feature>
<accession>A8GPD8</accession>
<sequence>MLRFKELYQQKIIENLQKEFSYKNKHEIPQIKKIVINMGVGEAIADSKVINNAVNDLTCISGQKPVVTLARKSIATFKLRESMKIGCKVTLRKDRMYDFLERLVIVALPRVKEFRGFSDKSFDGKGNFTFGLKEQIVFPEINYDKIDTIRGMDITIVTSAKTDKESKFLLSGFNLPFYN</sequence>
<keyword id="KW-0687">Ribonucleoprotein</keyword>
<keyword id="KW-0689">Ribosomal protein</keyword>
<keyword id="KW-0694">RNA-binding</keyword>
<keyword id="KW-0699">rRNA-binding</keyword>
<keyword id="KW-0820">tRNA-binding</keyword>
<reference key="1">
    <citation type="submission" date="2007-09" db="EMBL/GenBank/DDBJ databases">
        <title>Complete genome sequence of Rickettsia akari.</title>
        <authorList>
            <person name="Madan A."/>
            <person name="Fahey J."/>
            <person name="Helton E."/>
            <person name="Ketteman M."/>
            <person name="Madan A."/>
            <person name="Rodrigues S."/>
            <person name="Sanchez A."/>
            <person name="Whiting M."/>
            <person name="Dasch G."/>
            <person name="Eremeeva M."/>
        </authorList>
    </citation>
    <scope>NUCLEOTIDE SEQUENCE [LARGE SCALE GENOMIC DNA]</scope>
    <source>
        <strain>Hartford</strain>
    </source>
</reference>
<dbReference type="EMBL" id="CP000847">
    <property type="protein sequence ID" value="ABV75263.1"/>
    <property type="molecule type" value="Genomic_DNA"/>
</dbReference>
<dbReference type="RefSeq" id="WP_012149893.1">
    <property type="nucleotide sequence ID" value="NC_009881.1"/>
</dbReference>
<dbReference type="SMR" id="A8GPD8"/>
<dbReference type="STRING" id="293614.A1C_05045"/>
<dbReference type="KEGG" id="rak:A1C_05045"/>
<dbReference type="eggNOG" id="COG0094">
    <property type="taxonomic scope" value="Bacteria"/>
</dbReference>
<dbReference type="HOGENOM" id="CLU_061015_2_1_5"/>
<dbReference type="Proteomes" id="UP000006830">
    <property type="component" value="Chromosome"/>
</dbReference>
<dbReference type="GO" id="GO:1990904">
    <property type="term" value="C:ribonucleoprotein complex"/>
    <property type="evidence" value="ECO:0007669"/>
    <property type="project" value="UniProtKB-KW"/>
</dbReference>
<dbReference type="GO" id="GO:0005840">
    <property type="term" value="C:ribosome"/>
    <property type="evidence" value="ECO:0007669"/>
    <property type="project" value="UniProtKB-KW"/>
</dbReference>
<dbReference type="GO" id="GO:0019843">
    <property type="term" value="F:rRNA binding"/>
    <property type="evidence" value="ECO:0007669"/>
    <property type="project" value="UniProtKB-UniRule"/>
</dbReference>
<dbReference type="GO" id="GO:0003735">
    <property type="term" value="F:structural constituent of ribosome"/>
    <property type="evidence" value="ECO:0007669"/>
    <property type="project" value="InterPro"/>
</dbReference>
<dbReference type="GO" id="GO:0000049">
    <property type="term" value="F:tRNA binding"/>
    <property type="evidence" value="ECO:0007669"/>
    <property type="project" value="UniProtKB-UniRule"/>
</dbReference>
<dbReference type="GO" id="GO:0006412">
    <property type="term" value="P:translation"/>
    <property type="evidence" value="ECO:0007669"/>
    <property type="project" value="UniProtKB-UniRule"/>
</dbReference>
<dbReference type="FunFam" id="3.30.1440.10:FF:000001">
    <property type="entry name" value="50S ribosomal protein L5"/>
    <property type="match status" value="1"/>
</dbReference>
<dbReference type="Gene3D" id="3.30.1440.10">
    <property type="match status" value="1"/>
</dbReference>
<dbReference type="HAMAP" id="MF_01333_B">
    <property type="entry name" value="Ribosomal_uL5_B"/>
    <property type="match status" value="1"/>
</dbReference>
<dbReference type="InterPro" id="IPR002132">
    <property type="entry name" value="Ribosomal_uL5"/>
</dbReference>
<dbReference type="InterPro" id="IPR020930">
    <property type="entry name" value="Ribosomal_uL5_bac-type"/>
</dbReference>
<dbReference type="InterPro" id="IPR031309">
    <property type="entry name" value="Ribosomal_uL5_C"/>
</dbReference>
<dbReference type="InterPro" id="IPR020929">
    <property type="entry name" value="Ribosomal_uL5_CS"/>
</dbReference>
<dbReference type="InterPro" id="IPR022803">
    <property type="entry name" value="Ribosomal_uL5_dom_sf"/>
</dbReference>
<dbReference type="InterPro" id="IPR031310">
    <property type="entry name" value="Ribosomal_uL5_N"/>
</dbReference>
<dbReference type="NCBIfam" id="NF000585">
    <property type="entry name" value="PRK00010.1"/>
    <property type="match status" value="1"/>
</dbReference>
<dbReference type="PANTHER" id="PTHR11994">
    <property type="entry name" value="60S RIBOSOMAL PROTEIN L11-RELATED"/>
    <property type="match status" value="1"/>
</dbReference>
<dbReference type="Pfam" id="PF00281">
    <property type="entry name" value="Ribosomal_L5"/>
    <property type="match status" value="1"/>
</dbReference>
<dbReference type="Pfam" id="PF00673">
    <property type="entry name" value="Ribosomal_L5_C"/>
    <property type="match status" value="1"/>
</dbReference>
<dbReference type="PIRSF" id="PIRSF002161">
    <property type="entry name" value="Ribosomal_L5"/>
    <property type="match status" value="1"/>
</dbReference>
<dbReference type="SUPFAM" id="SSF55282">
    <property type="entry name" value="RL5-like"/>
    <property type="match status" value="1"/>
</dbReference>
<dbReference type="PROSITE" id="PS00358">
    <property type="entry name" value="RIBOSOMAL_L5"/>
    <property type="match status" value="1"/>
</dbReference>
<gene>
    <name evidence="1" type="primary">rplE</name>
    <name type="ordered locus">A1C_05045</name>
</gene>
<comment type="function">
    <text evidence="1">This is one of the proteins that bind and probably mediate the attachment of the 5S RNA into the large ribosomal subunit, where it forms part of the central protuberance. In the 70S ribosome it contacts protein S13 of the 30S subunit (bridge B1b), connecting the 2 subunits; this bridge is implicated in subunit movement. Contacts the P site tRNA; the 5S rRNA and some of its associated proteins might help stabilize positioning of ribosome-bound tRNAs.</text>
</comment>
<comment type="subunit">
    <text evidence="1">Part of the 50S ribosomal subunit; part of the 5S rRNA/L5/L18/L25 subcomplex. Contacts the 5S rRNA and the P site tRNA. Forms a bridge to the 30S subunit in the 70S ribosome.</text>
</comment>
<comment type="similarity">
    <text evidence="1">Belongs to the universal ribosomal protein uL5 family.</text>
</comment>
<name>RL5_RICAH</name>
<organism>
    <name type="scientific">Rickettsia akari (strain Hartford)</name>
    <dbReference type="NCBI Taxonomy" id="293614"/>
    <lineage>
        <taxon>Bacteria</taxon>
        <taxon>Pseudomonadati</taxon>
        <taxon>Pseudomonadota</taxon>
        <taxon>Alphaproteobacteria</taxon>
        <taxon>Rickettsiales</taxon>
        <taxon>Rickettsiaceae</taxon>
        <taxon>Rickettsieae</taxon>
        <taxon>Rickettsia</taxon>
        <taxon>spotted fever group</taxon>
    </lineage>
</organism>
<protein>
    <recommendedName>
        <fullName evidence="1">Large ribosomal subunit protein uL5</fullName>
    </recommendedName>
    <alternativeName>
        <fullName evidence="2">50S ribosomal protein L5</fullName>
    </alternativeName>
</protein>
<proteinExistence type="inferred from homology"/>